<sequence>MGLLDRLSILLGLKKKEVHVLCLGLDNSGKTTIINKLKPSNAQSQNILPTIGFSIEKFKSSSLSFTVFDMSGQGRYRNLWEHYYKEGQAIIFVIDSSDRLRMVVAKEELDTLLNHPDIKHRRIPILFFANKMDLRDAVTSVKVSQLLCLENIKDKPWHICASDAIKGEGLQEGVDWLQDQIQTVKT</sequence>
<gene>
    <name type="primary">ARL6</name>
</gene>
<name>ARL6_PONAB</name>
<evidence type="ECO:0000250" key="1"/>
<evidence type="ECO:0000250" key="2">
    <source>
        <dbReference type="UniProtKB" id="Q9H0F7"/>
    </source>
</evidence>
<evidence type="ECO:0000255" key="3"/>
<evidence type="ECO:0000305" key="4"/>
<protein>
    <recommendedName>
        <fullName>ADP-ribosylation factor-like protein 6</fullName>
    </recommendedName>
</protein>
<accession>Q5R4G5</accession>
<accession>Q5R400</accession>
<reference key="1">
    <citation type="submission" date="2004-11" db="EMBL/GenBank/DDBJ databases">
        <authorList>
            <consortium name="The German cDNA consortium"/>
        </authorList>
    </citation>
    <scope>NUCLEOTIDE SEQUENCE [LARGE SCALE MRNA]</scope>
    <source>
        <tissue>Brain cortex</tissue>
    </source>
</reference>
<proteinExistence type="evidence at transcript level"/>
<comment type="function">
    <text evidence="1">Involved in membrane protein trafficking at the base of the ciliary organelle. Mediates recruitment onto plasma membrane of the BBSome complex which would constitute a coat complex required for sorting of specific membrane proteins to the primary cilia. Together with the BBSome complex and LTZL1, controls SMO ciliary trafficking and contributes to the sonic hedgehog (SHH) pathway regulation. May regulate cilia assembly and disassembly and subsequent ciliary signaling events such as the Wnt signaling cascade. Isoform 2 may be required for proper retinal function and organization (By similarity).</text>
</comment>
<comment type="subunit">
    <text evidence="2">Interacts with SEC61B, ARL6IP1, ARL6IP2, ARL6IP3, ARL6IP4 ARL6IP5 and ARL6IP6. Interacts (GTP-bound form) with the BBSome a complex that contains BBS1, BBS2, BBS4, BBS5, BBS7, BBS8/TTC8, BBS9 and BBIP10. Interacts (GTP-free form) with IFT27.</text>
</comment>
<comment type="subcellular location">
    <subcellularLocation>
        <location evidence="1">Cell projection</location>
        <location evidence="1">Cilium membrane</location>
        <topology evidence="1">Peripheral membrane protein</topology>
        <orientation evidence="1">Cytoplasmic side</orientation>
    </subcellularLocation>
    <subcellularLocation>
        <location evidence="1">Cytoplasm</location>
        <location evidence="1">Cytoskeleton</location>
        <location evidence="1">Cilium axoneme</location>
    </subcellularLocation>
    <subcellularLocation>
        <location evidence="1">Cytoplasm</location>
        <location evidence="1">Cytoskeleton</location>
        <location evidence="1">Cilium basal body</location>
    </subcellularLocation>
    <text evidence="1">Appears in a pattern of punctae flanking the microtubule axoneme that likely correspond to small membrane-associated patches. Localizes to the so-called ciliary gate where vesicles carrying ciliary cargo fuse with the membrane (By similarity).</text>
</comment>
<comment type="similarity">
    <text evidence="4">Belongs to the small GTPase superfamily. Arf family.</text>
</comment>
<dbReference type="EMBL" id="CR861283">
    <property type="protein sequence ID" value="CAH93351.1"/>
    <property type="molecule type" value="mRNA"/>
</dbReference>
<dbReference type="EMBL" id="CR861460">
    <property type="protein sequence ID" value="CAH93516.1"/>
    <property type="molecule type" value="mRNA"/>
</dbReference>
<dbReference type="RefSeq" id="NP_001127054.1">
    <property type="nucleotide sequence ID" value="NM_001133582.1"/>
</dbReference>
<dbReference type="RefSeq" id="XP_024099901.1">
    <property type="nucleotide sequence ID" value="XM_024244133.3"/>
</dbReference>
<dbReference type="RefSeq" id="XP_054406406.1">
    <property type="nucleotide sequence ID" value="XM_054550431.2"/>
</dbReference>
<dbReference type="SMR" id="Q5R4G5"/>
<dbReference type="FunCoup" id="Q5R4G5">
    <property type="interactions" value="319"/>
</dbReference>
<dbReference type="STRING" id="9601.ENSPPYP00000015230"/>
<dbReference type="Ensembl" id="ENSPPYT00000015837.3">
    <property type="protein sequence ID" value="ENSPPYP00000015230.3"/>
    <property type="gene ID" value="ENSPPYG00000013623.3"/>
</dbReference>
<dbReference type="GeneID" id="100174082"/>
<dbReference type="KEGG" id="pon:100174082"/>
<dbReference type="CTD" id="84100"/>
<dbReference type="GeneTree" id="ENSGT00940000156459"/>
<dbReference type="InParanoid" id="Q5R4G5"/>
<dbReference type="OMA" id="NKPWHIC"/>
<dbReference type="OrthoDB" id="442317at2759"/>
<dbReference type="Proteomes" id="UP000001595">
    <property type="component" value="Chromosome 3"/>
</dbReference>
<dbReference type="GO" id="GO:0005879">
    <property type="term" value="C:axonemal microtubule"/>
    <property type="evidence" value="ECO:0000250"/>
    <property type="project" value="UniProtKB"/>
</dbReference>
<dbReference type="GO" id="GO:0005930">
    <property type="term" value="C:axoneme"/>
    <property type="evidence" value="ECO:0000250"/>
    <property type="project" value="UniProtKB"/>
</dbReference>
<dbReference type="GO" id="GO:0060170">
    <property type="term" value="C:ciliary membrane"/>
    <property type="evidence" value="ECO:0007669"/>
    <property type="project" value="UniProtKB-SubCell"/>
</dbReference>
<dbReference type="GO" id="GO:0005829">
    <property type="term" value="C:cytosol"/>
    <property type="evidence" value="ECO:0007669"/>
    <property type="project" value="Ensembl"/>
</dbReference>
<dbReference type="GO" id="GO:0030117">
    <property type="term" value="C:membrane coat"/>
    <property type="evidence" value="ECO:0000250"/>
    <property type="project" value="UniProtKB"/>
</dbReference>
<dbReference type="GO" id="GO:0005654">
    <property type="term" value="C:nucleoplasm"/>
    <property type="evidence" value="ECO:0007669"/>
    <property type="project" value="Ensembl"/>
</dbReference>
<dbReference type="GO" id="GO:0005525">
    <property type="term" value="F:GTP binding"/>
    <property type="evidence" value="ECO:0007669"/>
    <property type="project" value="UniProtKB-KW"/>
</dbReference>
<dbReference type="GO" id="GO:0003924">
    <property type="term" value="F:GTPase activity"/>
    <property type="evidence" value="ECO:0007669"/>
    <property type="project" value="InterPro"/>
</dbReference>
<dbReference type="GO" id="GO:0046872">
    <property type="term" value="F:metal ion binding"/>
    <property type="evidence" value="ECO:0007669"/>
    <property type="project" value="UniProtKB-KW"/>
</dbReference>
<dbReference type="GO" id="GO:0005543">
    <property type="term" value="F:phospholipid binding"/>
    <property type="evidence" value="ECO:0000250"/>
    <property type="project" value="UniProtKB"/>
</dbReference>
<dbReference type="GO" id="GO:0007420">
    <property type="term" value="P:brain development"/>
    <property type="evidence" value="ECO:0007669"/>
    <property type="project" value="Ensembl"/>
</dbReference>
<dbReference type="GO" id="GO:0060271">
    <property type="term" value="P:cilium assembly"/>
    <property type="evidence" value="ECO:0007669"/>
    <property type="project" value="Ensembl"/>
</dbReference>
<dbReference type="GO" id="GO:0045444">
    <property type="term" value="P:fat cell differentiation"/>
    <property type="evidence" value="ECO:0007669"/>
    <property type="project" value="Ensembl"/>
</dbReference>
<dbReference type="GO" id="GO:0097499">
    <property type="term" value="P:protein localization to non-motile cilium"/>
    <property type="evidence" value="ECO:0007669"/>
    <property type="project" value="Ensembl"/>
</dbReference>
<dbReference type="GO" id="GO:0051258">
    <property type="term" value="P:protein polymerization"/>
    <property type="evidence" value="ECO:0000250"/>
    <property type="project" value="UniProtKB"/>
</dbReference>
<dbReference type="GO" id="GO:0006612">
    <property type="term" value="P:protein targeting to membrane"/>
    <property type="evidence" value="ECO:0000250"/>
    <property type="project" value="UniProtKB"/>
</dbReference>
<dbReference type="GO" id="GO:1903445">
    <property type="term" value="P:protein transport from ciliary membrane to plasma membrane"/>
    <property type="evidence" value="ECO:0007669"/>
    <property type="project" value="Ensembl"/>
</dbReference>
<dbReference type="GO" id="GO:0008589">
    <property type="term" value="P:regulation of smoothened signaling pathway"/>
    <property type="evidence" value="ECO:0007669"/>
    <property type="project" value="Ensembl"/>
</dbReference>
<dbReference type="GO" id="GO:0010842">
    <property type="term" value="P:retina layer formation"/>
    <property type="evidence" value="ECO:0007669"/>
    <property type="project" value="Ensembl"/>
</dbReference>
<dbReference type="GO" id="GO:0016055">
    <property type="term" value="P:Wnt signaling pathway"/>
    <property type="evidence" value="ECO:0007669"/>
    <property type="project" value="Ensembl"/>
</dbReference>
<dbReference type="CDD" id="cd04157">
    <property type="entry name" value="Arl6"/>
    <property type="match status" value="1"/>
</dbReference>
<dbReference type="FunFam" id="3.40.50.300:FF:000457">
    <property type="entry name" value="ADP-ribosylation factor-like protein 6"/>
    <property type="match status" value="1"/>
</dbReference>
<dbReference type="Gene3D" id="3.40.50.300">
    <property type="entry name" value="P-loop containing nucleotide triphosphate hydrolases"/>
    <property type="match status" value="1"/>
</dbReference>
<dbReference type="InterPro" id="IPR041839">
    <property type="entry name" value="Arl6"/>
</dbReference>
<dbReference type="InterPro" id="IPR027417">
    <property type="entry name" value="P-loop_NTPase"/>
</dbReference>
<dbReference type="InterPro" id="IPR005225">
    <property type="entry name" value="Small_GTP-bd"/>
</dbReference>
<dbReference type="InterPro" id="IPR024156">
    <property type="entry name" value="Small_GTPase_ARF"/>
</dbReference>
<dbReference type="InterPro" id="IPR006689">
    <property type="entry name" value="Small_GTPase_ARF/SAR"/>
</dbReference>
<dbReference type="NCBIfam" id="TIGR00231">
    <property type="entry name" value="small_GTP"/>
    <property type="match status" value="1"/>
</dbReference>
<dbReference type="PANTHER" id="PTHR11711">
    <property type="entry name" value="ADP RIBOSYLATION FACTOR-RELATED"/>
    <property type="match status" value="1"/>
</dbReference>
<dbReference type="Pfam" id="PF00025">
    <property type="entry name" value="Arf"/>
    <property type="match status" value="1"/>
</dbReference>
<dbReference type="PRINTS" id="PR00328">
    <property type="entry name" value="SAR1GTPBP"/>
</dbReference>
<dbReference type="SMART" id="SM00177">
    <property type="entry name" value="ARF"/>
    <property type="match status" value="1"/>
</dbReference>
<dbReference type="SMART" id="SM00178">
    <property type="entry name" value="SAR"/>
    <property type="match status" value="1"/>
</dbReference>
<dbReference type="SUPFAM" id="SSF52540">
    <property type="entry name" value="P-loop containing nucleoside triphosphate hydrolases"/>
    <property type="match status" value="1"/>
</dbReference>
<dbReference type="PROSITE" id="PS51417">
    <property type="entry name" value="ARF"/>
    <property type="match status" value="1"/>
</dbReference>
<keyword id="KW-1003">Cell membrane</keyword>
<keyword id="KW-0966">Cell projection</keyword>
<keyword id="KW-0970">Cilium biogenesis/degradation</keyword>
<keyword id="KW-0963">Cytoplasm</keyword>
<keyword id="KW-0206">Cytoskeleton</keyword>
<keyword id="KW-0342">GTP-binding</keyword>
<keyword id="KW-0449">Lipoprotein</keyword>
<keyword id="KW-0460">Magnesium</keyword>
<keyword id="KW-0472">Membrane</keyword>
<keyword id="KW-0479">Metal-binding</keyword>
<keyword id="KW-0519">Myristate</keyword>
<keyword id="KW-0547">Nucleotide-binding</keyword>
<keyword id="KW-0653">Protein transport</keyword>
<keyword id="KW-1185">Reference proteome</keyword>
<keyword id="KW-0813">Transport</keyword>
<organism>
    <name type="scientific">Pongo abelii</name>
    <name type="common">Sumatran orangutan</name>
    <name type="synonym">Pongo pygmaeus abelii</name>
    <dbReference type="NCBI Taxonomy" id="9601"/>
    <lineage>
        <taxon>Eukaryota</taxon>
        <taxon>Metazoa</taxon>
        <taxon>Chordata</taxon>
        <taxon>Craniata</taxon>
        <taxon>Vertebrata</taxon>
        <taxon>Euteleostomi</taxon>
        <taxon>Mammalia</taxon>
        <taxon>Eutheria</taxon>
        <taxon>Euarchontoglires</taxon>
        <taxon>Primates</taxon>
        <taxon>Haplorrhini</taxon>
        <taxon>Catarrhini</taxon>
        <taxon>Hominidae</taxon>
        <taxon>Pongo</taxon>
    </lineage>
</organism>
<feature type="initiator methionine" description="Removed" evidence="3">
    <location>
        <position position="1"/>
    </location>
</feature>
<feature type="chain" id="PRO_0000207474" description="ADP-ribosylation factor-like protein 6">
    <location>
        <begin position="2"/>
        <end position="186"/>
    </location>
</feature>
<feature type="binding site" evidence="1">
    <location>
        <begin position="24"/>
        <end position="31"/>
    </location>
    <ligand>
        <name>GTP</name>
        <dbReference type="ChEBI" id="CHEBI:37565"/>
    </ligand>
</feature>
<feature type="binding site" evidence="1">
    <location>
        <position position="50"/>
    </location>
    <ligand>
        <name>GTP</name>
        <dbReference type="ChEBI" id="CHEBI:37565"/>
    </ligand>
</feature>
<feature type="binding site" evidence="1">
    <location>
        <position position="50"/>
    </location>
    <ligand>
        <name>Mg(2+)</name>
        <dbReference type="ChEBI" id="CHEBI:18420"/>
    </ligand>
</feature>
<feature type="binding site" evidence="1">
    <location>
        <begin position="69"/>
        <end position="73"/>
    </location>
    <ligand>
        <name>GTP</name>
        <dbReference type="ChEBI" id="CHEBI:37565"/>
    </ligand>
</feature>
<feature type="binding site" evidence="1">
    <location>
        <position position="72"/>
    </location>
    <ligand>
        <name>GTP</name>
        <dbReference type="ChEBI" id="CHEBI:37565"/>
    </ligand>
</feature>
<feature type="binding site" evidence="1">
    <location>
        <begin position="130"/>
        <end position="133"/>
    </location>
    <ligand>
        <name>GTP</name>
        <dbReference type="ChEBI" id="CHEBI:37565"/>
    </ligand>
</feature>
<feature type="binding site" evidence="1">
    <location>
        <position position="164"/>
    </location>
    <ligand>
        <name>GTP</name>
        <dbReference type="ChEBI" id="CHEBI:37565"/>
    </ligand>
</feature>
<feature type="lipid moiety-binding region" description="N-myristoyl glycine" evidence="3">
    <location>
        <position position="2"/>
    </location>
</feature>
<feature type="sequence conflict" description="In Ref. 1; CAH93516." evidence="4" ref="1">
    <original>G</original>
    <variation>E</variation>
    <location>
        <position position="74"/>
    </location>
</feature>
<feature type="sequence conflict" description="In Ref. 1; CAH93516." evidence="4" ref="1">
    <original>V</original>
    <variation>A</variation>
    <location>
        <position position="138"/>
    </location>
</feature>